<proteinExistence type="inferred from homology"/>
<sequence length="441" mass="48029">MDTDILKMQDREVFEAIALETGRQMETLELIASENFTSRAVMQACGSVMTNKYAEGYPGKRYYGGCEFVDIAENLARDRAKKLFGCEYVNVQPHSGSSANMAVLFSVLKPGDCIMGLDLSHGGHLTHGSSVNFSGQMYKAHAYGVDGETGIIDMNQVEKMALEVRPRLIICGASAYSQGFDFKAFREIADKVGAFLMADIAHPAGLIVSGLLSDPMPHCHFVTTTTHKTLRGPRGGMIMMGKDFENPMGITIKTKNGQRVKMMSEVMDAEVMPGIQGGPLMHIIAGKAVAFGEALRPEFRQYAMQVRSNAAAMSERFLSLGYNIVSGGTKNHLMLLDLRNKDITGKVVENTLHEAGITVNKNMVPFDDKSPFVTSGIRIGTAAMTTRGMNEDDSRLIAELIDRVILSAASPESSSVCRSVKEEIRSLCLRNPLEGYGVTPS</sequence>
<dbReference type="EC" id="2.1.2.1" evidence="1"/>
<dbReference type="EMBL" id="CP000607">
    <property type="protein sequence ID" value="ABP37392.1"/>
    <property type="molecule type" value="Genomic_DNA"/>
</dbReference>
<dbReference type="SMR" id="A4SFY3"/>
<dbReference type="STRING" id="290318.Cvib_1381"/>
<dbReference type="KEGG" id="pvi:Cvib_1381"/>
<dbReference type="eggNOG" id="COG0112">
    <property type="taxonomic scope" value="Bacteria"/>
</dbReference>
<dbReference type="HOGENOM" id="CLU_022477_2_1_10"/>
<dbReference type="OrthoDB" id="9803846at2"/>
<dbReference type="UniPathway" id="UPA00193"/>
<dbReference type="UniPathway" id="UPA00288">
    <property type="reaction ID" value="UER01023"/>
</dbReference>
<dbReference type="GO" id="GO:0005829">
    <property type="term" value="C:cytosol"/>
    <property type="evidence" value="ECO:0007669"/>
    <property type="project" value="TreeGrafter"/>
</dbReference>
<dbReference type="GO" id="GO:0004372">
    <property type="term" value="F:glycine hydroxymethyltransferase activity"/>
    <property type="evidence" value="ECO:0007669"/>
    <property type="project" value="UniProtKB-UniRule"/>
</dbReference>
<dbReference type="GO" id="GO:0030170">
    <property type="term" value="F:pyridoxal phosphate binding"/>
    <property type="evidence" value="ECO:0007669"/>
    <property type="project" value="UniProtKB-UniRule"/>
</dbReference>
<dbReference type="GO" id="GO:0019264">
    <property type="term" value="P:glycine biosynthetic process from serine"/>
    <property type="evidence" value="ECO:0007669"/>
    <property type="project" value="UniProtKB-UniRule"/>
</dbReference>
<dbReference type="GO" id="GO:0035999">
    <property type="term" value="P:tetrahydrofolate interconversion"/>
    <property type="evidence" value="ECO:0007669"/>
    <property type="project" value="UniProtKB-UniRule"/>
</dbReference>
<dbReference type="CDD" id="cd00378">
    <property type="entry name" value="SHMT"/>
    <property type="match status" value="1"/>
</dbReference>
<dbReference type="FunFam" id="3.40.640.10:FF:000001">
    <property type="entry name" value="Serine hydroxymethyltransferase"/>
    <property type="match status" value="1"/>
</dbReference>
<dbReference type="Gene3D" id="3.90.1150.10">
    <property type="entry name" value="Aspartate Aminotransferase, domain 1"/>
    <property type="match status" value="1"/>
</dbReference>
<dbReference type="Gene3D" id="3.40.640.10">
    <property type="entry name" value="Type I PLP-dependent aspartate aminotransferase-like (Major domain)"/>
    <property type="match status" value="1"/>
</dbReference>
<dbReference type="HAMAP" id="MF_00051">
    <property type="entry name" value="SHMT"/>
    <property type="match status" value="1"/>
</dbReference>
<dbReference type="InterPro" id="IPR015424">
    <property type="entry name" value="PyrdxlP-dep_Trfase"/>
</dbReference>
<dbReference type="InterPro" id="IPR015421">
    <property type="entry name" value="PyrdxlP-dep_Trfase_major"/>
</dbReference>
<dbReference type="InterPro" id="IPR015422">
    <property type="entry name" value="PyrdxlP-dep_Trfase_small"/>
</dbReference>
<dbReference type="InterPro" id="IPR001085">
    <property type="entry name" value="Ser_HO-MeTrfase"/>
</dbReference>
<dbReference type="InterPro" id="IPR049943">
    <property type="entry name" value="Ser_HO-MeTrfase-like"/>
</dbReference>
<dbReference type="InterPro" id="IPR019798">
    <property type="entry name" value="Ser_HO-MeTrfase_PLP_BS"/>
</dbReference>
<dbReference type="InterPro" id="IPR039429">
    <property type="entry name" value="SHMT-like_dom"/>
</dbReference>
<dbReference type="NCBIfam" id="NF000586">
    <property type="entry name" value="PRK00011.1"/>
    <property type="match status" value="1"/>
</dbReference>
<dbReference type="PANTHER" id="PTHR11680">
    <property type="entry name" value="SERINE HYDROXYMETHYLTRANSFERASE"/>
    <property type="match status" value="1"/>
</dbReference>
<dbReference type="PANTHER" id="PTHR11680:SF35">
    <property type="entry name" value="SERINE HYDROXYMETHYLTRANSFERASE 1"/>
    <property type="match status" value="1"/>
</dbReference>
<dbReference type="Pfam" id="PF00464">
    <property type="entry name" value="SHMT"/>
    <property type="match status" value="1"/>
</dbReference>
<dbReference type="PIRSF" id="PIRSF000412">
    <property type="entry name" value="SHMT"/>
    <property type="match status" value="1"/>
</dbReference>
<dbReference type="SUPFAM" id="SSF53383">
    <property type="entry name" value="PLP-dependent transferases"/>
    <property type="match status" value="1"/>
</dbReference>
<dbReference type="PROSITE" id="PS00096">
    <property type="entry name" value="SHMT"/>
    <property type="match status" value="1"/>
</dbReference>
<accession>A4SFY3</accession>
<organism>
    <name type="scientific">Chlorobium phaeovibrioides (strain DSM 265 / 1930)</name>
    <name type="common">Prosthecochloris vibrioformis (strain DSM 265)</name>
    <dbReference type="NCBI Taxonomy" id="290318"/>
    <lineage>
        <taxon>Bacteria</taxon>
        <taxon>Pseudomonadati</taxon>
        <taxon>Chlorobiota</taxon>
        <taxon>Chlorobiia</taxon>
        <taxon>Chlorobiales</taxon>
        <taxon>Chlorobiaceae</taxon>
        <taxon>Chlorobium/Pelodictyon group</taxon>
        <taxon>Chlorobium</taxon>
    </lineage>
</organism>
<protein>
    <recommendedName>
        <fullName evidence="1">Serine hydroxymethyltransferase</fullName>
        <shortName evidence="1">SHMT</shortName>
        <shortName evidence="1">Serine methylase</shortName>
        <ecNumber evidence="1">2.1.2.1</ecNumber>
    </recommendedName>
</protein>
<reference key="1">
    <citation type="submission" date="2007-03" db="EMBL/GenBank/DDBJ databases">
        <title>Complete sequence of Prosthecochloris vibrioformis DSM 265.</title>
        <authorList>
            <consortium name="US DOE Joint Genome Institute"/>
            <person name="Copeland A."/>
            <person name="Lucas S."/>
            <person name="Lapidus A."/>
            <person name="Barry K."/>
            <person name="Detter J.C."/>
            <person name="Glavina del Rio T."/>
            <person name="Hammon N."/>
            <person name="Israni S."/>
            <person name="Pitluck S."/>
            <person name="Schmutz J."/>
            <person name="Larimer F."/>
            <person name="Land M."/>
            <person name="Hauser L."/>
            <person name="Mikhailova N."/>
            <person name="Li T."/>
            <person name="Overmann J."/>
            <person name="Schuster S.C."/>
            <person name="Bryant D.A."/>
            <person name="Richardson P."/>
        </authorList>
    </citation>
    <scope>NUCLEOTIDE SEQUENCE [LARGE SCALE GENOMIC DNA]</scope>
    <source>
        <strain>DSM 265 / 1930</strain>
    </source>
</reference>
<gene>
    <name evidence="1" type="primary">glyA</name>
    <name type="ordered locus">Cvib_1381</name>
</gene>
<evidence type="ECO:0000255" key="1">
    <source>
        <dbReference type="HAMAP-Rule" id="MF_00051"/>
    </source>
</evidence>
<name>GLYA_CHLPM</name>
<keyword id="KW-0028">Amino-acid biosynthesis</keyword>
<keyword id="KW-0963">Cytoplasm</keyword>
<keyword id="KW-0554">One-carbon metabolism</keyword>
<keyword id="KW-0663">Pyridoxal phosphate</keyword>
<keyword id="KW-0808">Transferase</keyword>
<feature type="chain" id="PRO_1000074904" description="Serine hydroxymethyltransferase">
    <location>
        <begin position="1"/>
        <end position="441"/>
    </location>
</feature>
<feature type="binding site" evidence="1">
    <location>
        <position position="119"/>
    </location>
    <ligand>
        <name>(6S)-5,6,7,8-tetrahydrofolate</name>
        <dbReference type="ChEBI" id="CHEBI:57453"/>
    </ligand>
</feature>
<feature type="binding site" evidence="1">
    <location>
        <begin position="123"/>
        <end position="125"/>
    </location>
    <ligand>
        <name>(6S)-5,6,7,8-tetrahydrofolate</name>
        <dbReference type="ChEBI" id="CHEBI:57453"/>
    </ligand>
</feature>
<feature type="binding site" evidence="1">
    <location>
        <begin position="370"/>
        <end position="372"/>
    </location>
    <ligand>
        <name>(6S)-5,6,7,8-tetrahydrofolate</name>
        <dbReference type="ChEBI" id="CHEBI:57453"/>
    </ligand>
</feature>
<feature type="site" description="Plays an important role in substrate specificity" evidence="1">
    <location>
        <position position="227"/>
    </location>
</feature>
<feature type="modified residue" description="N6-(pyridoxal phosphate)lysine" evidence="1">
    <location>
        <position position="228"/>
    </location>
</feature>
<comment type="function">
    <text evidence="1">Catalyzes the reversible interconversion of serine and glycine with tetrahydrofolate (THF) serving as the one-carbon carrier. This reaction serves as the major source of one-carbon groups required for the biosynthesis of purines, thymidylate, methionine, and other important biomolecules. Also exhibits THF-independent aldolase activity toward beta-hydroxyamino acids, producing glycine and aldehydes, via a retro-aldol mechanism.</text>
</comment>
<comment type="catalytic activity">
    <reaction evidence="1">
        <text>(6R)-5,10-methylene-5,6,7,8-tetrahydrofolate + glycine + H2O = (6S)-5,6,7,8-tetrahydrofolate + L-serine</text>
        <dbReference type="Rhea" id="RHEA:15481"/>
        <dbReference type="ChEBI" id="CHEBI:15377"/>
        <dbReference type="ChEBI" id="CHEBI:15636"/>
        <dbReference type="ChEBI" id="CHEBI:33384"/>
        <dbReference type="ChEBI" id="CHEBI:57305"/>
        <dbReference type="ChEBI" id="CHEBI:57453"/>
        <dbReference type="EC" id="2.1.2.1"/>
    </reaction>
</comment>
<comment type="cofactor">
    <cofactor evidence="1">
        <name>pyridoxal 5'-phosphate</name>
        <dbReference type="ChEBI" id="CHEBI:597326"/>
    </cofactor>
</comment>
<comment type="pathway">
    <text evidence="1">One-carbon metabolism; tetrahydrofolate interconversion.</text>
</comment>
<comment type="pathway">
    <text evidence="1">Amino-acid biosynthesis; glycine biosynthesis; glycine from L-serine: step 1/1.</text>
</comment>
<comment type="subunit">
    <text evidence="1">Homodimer.</text>
</comment>
<comment type="subcellular location">
    <subcellularLocation>
        <location evidence="1">Cytoplasm</location>
    </subcellularLocation>
</comment>
<comment type="similarity">
    <text evidence="1">Belongs to the SHMT family.</text>
</comment>